<keyword id="KW-0963">Cytoplasm</keyword>
<keyword id="KW-0350">Heme biosynthesis</keyword>
<keyword id="KW-0408">Iron</keyword>
<keyword id="KW-0456">Lyase</keyword>
<keyword id="KW-0479">Metal-binding</keyword>
<keyword id="KW-0627">Porphyrin biosynthesis</keyword>
<keyword id="KW-1185">Reference proteome</keyword>
<reference key="1">
    <citation type="submission" date="2007-10" db="EMBL/GenBank/DDBJ databases">
        <title>Brucella canis ATCC 23365 whole genome shotgun sequencing project.</title>
        <authorList>
            <person name="Setubal J.C."/>
            <person name="Bowns C."/>
            <person name="Boyle S."/>
            <person name="Crasta O.R."/>
            <person name="Czar M.J."/>
            <person name="Dharmanolla C."/>
            <person name="Gillespie J.J."/>
            <person name="Kenyon R.W."/>
            <person name="Lu J."/>
            <person name="Mane S."/>
            <person name="Mohapatra S."/>
            <person name="Nagrani S."/>
            <person name="Purkayastha A."/>
            <person name="Rajasimha H.K."/>
            <person name="Shallom J.M."/>
            <person name="Shallom S."/>
            <person name="Shukla M."/>
            <person name="Snyder E.E."/>
            <person name="Sobral B.W."/>
            <person name="Wattam A.R."/>
            <person name="Will R."/>
            <person name="Williams K."/>
            <person name="Yoo H."/>
            <person name="Bruce D."/>
            <person name="Detter C."/>
            <person name="Munk C."/>
            <person name="Brettin T.S."/>
        </authorList>
    </citation>
    <scope>NUCLEOTIDE SEQUENCE [LARGE SCALE GENOMIC DNA]</scope>
    <source>
        <strain>ATCC 23365 / NCTC 10854 / RM-666</strain>
    </source>
</reference>
<accession>A9MDJ3</accession>
<protein>
    <recommendedName>
        <fullName evidence="1">Ferrochelatase</fullName>
        <ecNumber evidence="1">4.98.1.1</ecNumber>
    </recommendedName>
    <alternativeName>
        <fullName evidence="1">Heme synthase</fullName>
    </alternativeName>
    <alternativeName>
        <fullName evidence="1">Protoheme ferro-lyase</fullName>
    </alternativeName>
</protein>
<name>HEMH_BRUC2</name>
<feature type="chain" id="PRO_1000079192" description="Ferrochelatase">
    <location>
        <begin position="1"/>
        <end position="352"/>
    </location>
</feature>
<feature type="binding site" evidence="1">
    <location>
        <position position="222"/>
    </location>
    <ligand>
        <name>Fe cation</name>
        <dbReference type="ChEBI" id="CHEBI:24875"/>
    </ligand>
</feature>
<feature type="binding site" evidence="1">
    <location>
        <position position="303"/>
    </location>
    <ligand>
        <name>Fe cation</name>
        <dbReference type="ChEBI" id="CHEBI:24875"/>
    </ligand>
</feature>
<comment type="function">
    <text evidence="1">Catalyzes the ferrous insertion into protoporphyrin IX.</text>
</comment>
<comment type="catalytic activity">
    <reaction evidence="1">
        <text>heme b + 2 H(+) = protoporphyrin IX + Fe(2+)</text>
        <dbReference type="Rhea" id="RHEA:22584"/>
        <dbReference type="ChEBI" id="CHEBI:15378"/>
        <dbReference type="ChEBI" id="CHEBI:29033"/>
        <dbReference type="ChEBI" id="CHEBI:57306"/>
        <dbReference type="ChEBI" id="CHEBI:60344"/>
        <dbReference type="EC" id="4.98.1.1"/>
    </reaction>
</comment>
<comment type="pathway">
    <text evidence="1">Porphyrin-containing compound metabolism; protoheme biosynthesis; protoheme from protoporphyrin-IX: step 1/1.</text>
</comment>
<comment type="subcellular location">
    <subcellularLocation>
        <location evidence="1">Cytoplasm</location>
    </subcellularLocation>
</comment>
<comment type="similarity">
    <text evidence="1">Belongs to the ferrochelatase family.</text>
</comment>
<dbReference type="EC" id="4.98.1.1" evidence="1"/>
<dbReference type="EMBL" id="CP000873">
    <property type="protein sequence ID" value="ABX63281.1"/>
    <property type="molecule type" value="Genomic_DNA"/>
</dbReference>
<dbReference type="RefSeq" id="WP_006133593.1">
    <property type="nucleotide sequence ID" value="NC_010104.1"/>
</dbReference>
<dbReference type="SMR" id="A9MDJ3"/>
<dbReference type="GeneID" id="55591813"/>
<dbReference type="KEGG" id="bcs:BCAN_B0079"/>
<dbReference type="HOGENOM" id="CLU_018884_0_0_5"/>
<dbReference type="PhylomeDB" id="A9MDJ3"/>
<dbReference type="UniPathway" id="UPA00252">
    <property type="reaction ID" value="UER00325"/>
</dbReference>
<dbReference type="PRO" id="PR:A9MDJ3"/>
<dbReference type="Proteomes" id="UP000001385">
    <property type="component" value="Chromosome II"/>
</dbReference>
<dbReference type="GO" id="GO:0005737">
    <property type="term" value="C:cytoplasm"/>
    <property type="evidence" value="ECO:0007669"/>
    <property type="project" value="UniProtKB-SubCell"/>
</dbReference>
<dbReference type="GO" id="GO:0004325">
    <property type="term" value="F:ferrochelatase activity"/>
    <property type="evidence" value="ECO:0007669"/>
    <property type="project" value="UniProtKB-UniRule"/>
</dbReference>
<dbReference type="GO" id="GO:0046872">
    <property type="term" value="F:metal ion binding"/>
    <property type="evidence" value="ECO:0007669"/>
    <property type="project" value="UniProtKB-KW"/>
</dbReference>
<dbReference type="GO" id="GO:0006783">
    <property type="term" value="P:heme biosynthetic process"/>
    <property type="evidence" value="ECO:0007669"/>
    <property type="project" value="UniProtKB-UniRule"/>
</dbReference>
<dbReference type="CDD" id="cd00419">
    <property type="entry name" value="Ferrochelatase_C"/>
    <property type="match status" value="1"/>
</dbReference>
<dbReference type="CDD" id="cd03411">
    <property type="entry name" value="Ferrochelatase_N"/>
    <property type="match status" value="1"/>
</dbReference>
<dbReference type="FunFam" id="3.40.50.1400:FF:000002">
    <property type="entry name" value="Ferrochelatase"/>
    <property type="match status" value="1"/>
</dbReference>
<dbReference type="Gene3D" id="3.40.50.1400">
    <property type="match status" value="2"/>
</dbReference>
<dbReference type="HAMAP" id="MF_00323">
    <property type="entry name" value="Ferrochelatase"/>
    <property type="match status" value="1"/>
</dbReference>
<dbReference type="InterPro" id="IPR001015">
    <property type="entry name" value="Ferrochelatase"/>
</dbReference>
<dbReference type="InterPro" id="IPR019772">
    <property type="entry name" value="Ferrochelatase_AS"/>
</dbReference>
<dbReference type="InterPro" id="IPR033644">
    <property type="entry name" value="Ferrochelatase_C"/>
</dbReference>
<dbReference type="InterPro" id="IPR033659">
    <property type="entry name" value="Ferrochelatase_N"/>
</dbReference>
<dbReference type="NCBIfam" id="TIGR00109">
    <property type="entry name" value="hemH"/>
    <property type="match status" value="1"/>
</dbReference>
<dbReference type="PANTHER" id="PTHR11108">
    <property type="entry name" value="FERROCHELATASE"/>
    <property type="match status" value="1"/>
</dbReference>
<dbReference type="PANTHER" id="PTHR11108:SF1">
    <property type="entry name" value="FERROCHELATASE, MITOCHONDRIAL"/>
    <property type="match status" value="1"/>
</dbReference>
<dbReference type="Pfam" id="PF00762">
    <property type="entry name" value="Ferrochelatase"/>
    <property type="match status" value="1"/>
</dbReference>
<dbReference type="SUPFAM" id="SSF53800">
    <property type="entry name" value="Chelatase"/>
    <property type="match status" value="1"/>
</dbReference>
<dbReference type="PROSITE" id="PS00534">
    <property type="entry name" value="FERROCHELATASE"/>
    <property type="match status" value="1"/>
</dbReference>
<organism>
    <name type="scientific">Brucella canis (strain ATCC 23365 / NCTC 10854 / RM-666)</name>
    <dbReference type="NCBI Taxonomy" id="483179"/>
    <lineage>
        <taxon>Bacteria</taxon>
        <taxon>Pseudomonadati</taxon>
        <taxon>Pseudomonadota</taxon>
        <taxon>Alphaproteobacteria</taxon>
        <taxon>Hyphomicrobiales</taxon>
        <taxon>Brucellaceae</taxon>
        <taxon>Brucella/Ochrobactrum group</taxon>
        <taxon>Brucella</taxon>
    </lineage>
</organism>
<evidence type="ECO:0000255" key="1">
    <source>
        <dbReference type="HAMAP-Rule" id="MF_00323"/>
    </source>
</evidence>
<sequence>MSGTDKVRVNVSQTAQTPLHTSAKLPKVGVLLVNLGTPDGTSYGPMRRYLAEFLSDRRVIEWSRLIWYPILYGIVLNTRPRRSGRLYDRIWNHENNESPLRTYTRAQGEKLAKALSDQPNVVVDLAMRYGQPSIESITDRLLQQGCERIVIFPLYPQYSATTTATVNDKFFEALMKKRFMPAIRTVPSYEAEPVYIDALARSVEKHLATLSFKPEVILTSYHGIPKSYSDKGDPYRQQCLETTRLLRERLGLGEDEMRATFQSRFGPEEWLQPYTDETVKELAKNGVKSVAVLNPGFVADCLETVDEIGNEAAEEFLENGGENFSHIPCLNDSEEGMKVIETLVRRELLGWV</sequence>
<gene>
    <name evidence="1" type="primary">hemH</name>
    <name type="ordered locus">BCAN_B0079</name>
</gene>
<proteinExistence type="inferred from homology"/>